<sequence length="390" mass="43540">MNKTNPTIALVAGEVSGDILGAGLIRQLKAHYPNARFIGIAGTRMLAEGCKTLVDMEELSVMGLAEILKHLPRLLKIRKNVIQTMLQEKPDVYIGIDAPDFNLDVELKLKANGIKTIHYVSPSVWAWRQNRIHKIAKATHQVLAFLPFEKAFYDKFNVPCRFIGHTMADAIPLKPNRAEACQMLQIDPAQRYLAILVGSRGSEVEFLAEPFLKTALLLKEQFPDLQLLVPLVNEKRRIQFESIKAKIAPNLDLHLIDGNARQAMIAADATLLASGTAALEAMLCKSPMVVGYRMKPLTYFLAKRLVKTDYISLPNLLANEMLVPEMIQEECTPELLAEKLSAYLSDDESAVKNRLVLIQHFTDLHQKIQCNADKQAAQAVIDLLEGKENV</sequence>
<reference key="1">
    <citation type="journal article" date="2007" name="Genome Biol.">
        <title>Characterization and modeling of the Haemophilus influenzae core and supragenomes based on the complete genomic sequences of Rd and 12 clinical nontypeable strains.</title>
        <authorList>
            <person name="Hogg J.S."/>
            <person name="Hu F.Z."/>
            <person name="Janto B."/>
            <person name="Boissy R."/>
            <person name="Hayes J."/>
            <person name="Keefe R."/>
            <person name="Post J.C."/>
            <person name="Ehrlich G.D."/>
        </authorList>
    </citation>
    <scope>NUCLEOTIDE SEQUENCE [LARGE SCALE GENOMIC DNA]</scope>
    <source>
        <strain>PittGG</strain>
    </source>
</reference>
<dbReference type="EC" id="2.4.1.182" evidence="1"/>
<dbReference type="EMBL" id="CP000672">
    <property type="protein sequence ID" value="ABR00594.1"/>
    <property type="molecule type" value="Genomic_DNA"/>
</dbReference>
<dbReference type="SMR" id="A5UII8"/>
<dbReference type="CAZy" id="GT19">
    <property type="family name" value="Glycosyltransferase Family 19"/>
</dbReference>
<dbReference type="KEGG" id="hiq:CGSHiGG_08930"/>
<dbReference type="HOGENOM" id="CLU_036577_3_0_6"/>
<dbReference type="UniPathway" id="UPA00973"/>
<dbReference type="Proteomes" id="UP000001990">
    <property type="component" value="Chromosome"/>
</dbReference>
<dbReference type="GO" id="GO:0016020">
    <property type="term" value="C:membrane"/>
    <property type="evidence" value="ECO:0007669"/>
    <property type="project" value="GOC"/>
</dbReference>
<dbReference type="GO" id="GO:0008915">
    <property type="term" value="F:lipid-A-disaccharide synthase activity"/>
    <property type="evidence" value="ECO:0007669"/>
    <property type="project" value="UniProtKB-UniRule"/>
</dbReference>
<dbReference type="GO" id="GO:0005543">
    <property type="term" value="F:phospholipid binding"/>
    <property type="evidence" value="ECO:0007669"/>
    <property type="project" value="TreeGrafter"/>
</dbReference>
<dbReference type="GO" id="GO:0009245">
    <property type="term" value="P:lipid A biosynthetic process"/>
    <property type="evidence" value="ECO:0007669"/>
    <property type="project" value="UniProtKB-UniRule"/>
</dbReference>
<dbReference type="HAMAP" id="MF_00392">
    <property type="entry name" value="LpxB"/>
    <property type="match status" value="1"/>
</dbReference>
<dbReference type="InterPro" id="IPR003835">
    <property type="entry name" value="Glyco_trans_19"/>
</dbReference>
<dbReference type="NCBIfam" id="TIGR00215">
    <property type="entry name" value="lpxB"/>
    <property type="match status" value="1"/>
</dbReference>
<dbReference type="PANTHER" id="PTHR30372">
    <property type="entry name" value="LIPID-A-DISACCHARIDE SYNTHASE"/>
    <property type="match status" value="1"/>
</dbReference>
<dbReference type="PANTHER" id="PTHR30372:SF4">
    <property type="entry name" value="LIPID-A-DISACCHARIDE SYNTHASE, MITOCHONDRIAL-RELATED"/>
    <property type="match status" value="1"/>
</dbReference>
<dbReference type="Pfam" id="PF02684">
    <property type="entry name" value="LpxB"/>
    <property type="match status" value="1"/>
</dbReference>
<dbReference type="SUPFAM" id="SSF53756">
    <property type="entry name" value="UDP-Glycosyltransferase/glycogen phosphorylase"/>
    <property type="match status" value="1"/>
</dbReference>
<organism>
    <name type="scientific">Haemophilus influenzae (strain PittGG)</name>
    <dbReference type="NCBI Taxonomy" id="374931"/>
    <lineage>
        <taxon>Bacteria</taxon>
        <taxon>Pseudomonadati</taxon>
        <taxon>Pseudomonadota</taxon>
        <taxon>Gammaproteobacteria</taxon>
        <taxon>Pasteurellales</taxon>
        <taxon>Pasteurellaceae</taxon>
        <taxon>Haemophilus</taxon>
    </lineage>
</organism>
<name>LPXB_HAEIG</name>
<feature type="chain" id="PRO_1000049401" description="Lipid-A-disaccharide synthase">
    <location>
        <begin position="1"/>
        <end position="390"/>
    </location>
</feature>
<accession>A5UII8</accession>
<protein>
    <recommendedName>
        <fullName evidence="1">Lipid-A-disaccharide synthase</fullName>
        <ecNumber evidence="1">2.4.1.182</ecNumber>
    </recommendedName>
</protein>
<comment type="function">
    <text evidence="1">Condensation of UDP-2,3-diacylglucosamine and 2,3-diacylglucosamine-1-phosphate to form lipid A disaccharide, a precursor of lipid A, a phosphorylated glycolipid that anchors the lipopolysaccharide to the outer membrane of the cell.</text>
</comment>
<comment type="catalytic activity">
    <reaction evidence="1">
        <text>a lipid X + a UDP-2-N,3-O-bis[(3R)-3-hydroxyacyl]-alpha-D-glucosamine = a lipid A disaccharide + UDP + H(+)</text>
        <dbReference type="Rhea" id="RHEA:67828"/>
        <dbReference type="ChEBI" id="CHEBI:15378"/>
        <dbReference type="ChEBI" id="CHEBI:58223"/>
        <dbReference type="ChEBI" id="CHEBI:137748"/>
        <dbReference type="ChEBI" id="CHEBI:176338"/>
        <dbReference type="ChEBI" id="CHEBI:176343"/>
        <dbReference type="EC" id="2.4.1.182"/>
    </reaction>
</comment>
<comment type="pathway">
    <text evidence="1">Bacterial outer membrane biogenesis; LPS lipid A biosynthesis.</text>
</comment>
<comment type="similarity">
    <text evidence="1">Belongs to the LpxB family.</text>
</comment>
<evidence type="ECO:0000255" key="1">
    <source>
        <dbReference type="HAMAP-Rule" id="MF_00392"/>
    </source>
</evidence>
<proteinExistence type="inferred from homology"/>
<keyword id="KW-0328">Glycosyltransferase</keyword>
<keyword id="KW-0441">Lipid A biosynthesis</keyword>
<keyword id="KW-0444">Lipid biosynthesis</keyword>
<keyword id="KW-0443">Lipid metabolism</keyword>
<keyword id="KW-0808">Transferase</keyword>
<gene>
    <name evidence="1" type="primary">lpxB</name>
    <name type="ordered locus">CGSHiGG_08930</name>
</gene>